<dbReference type="EMBL" id="AJ567472">
    <property type="protein sequence ID" value="CAD98949.1"/>
    <property type="molecule type" value="Genomic_DNA"/>
</dbReference>
<dbReference type="RefSeq" id="YP_003745.1">
    <property type="nucleotide sequence ID" value="NC_005830.1"/>
</dbReference>
<dbReference type="KEGG" id="vg:2769188"/>
<dbReference type="Proteomes" id="UP000000514">
    <property type="component" value="Genome"/>
</dbReference>
<dbReference type="GO" id="GO:0008270">
    <property type="term" value="F:zinc ion binding"/>
    <property type="evidence" value="ECO:0007669"/>
    <property type="project" value="UniProtKB-KW"/>
</dbReference>
<dbReference type="InterPro" id="IPR013087">
    <property type="entry name" value="Znf_C2H2_type"/>
</dbReference>
<dbReference type="PROSITE" id="PS00028">
    <property type="entry name" value="ZINC_FINGER_C2H2_1"/>
    <property type="match status" value="1"/>
</dbReference>
<accession>Q70LD1</accession>
<name>Y110_AFV1Y</name>
<organism>
    <name type="scientific">Acidianus filamentous virus 1 (isolate United States/Yellowstone)</name>
    <name type="common">AFV-1</name>
    <dbReference type="NCBI Taxonomy" id="654909"/>
    <lineage>
        <taxon>Viruses</taxon>
        <taxon>Adnaviria</taxon>
        <taxon>Zilligvirae</taxon>
        <taxon>Taleaviricota</taxon>
        <taxon>Tokiviricetes</taxon>
        <taxon>Ligamenvirales</taxon>
        <taxon>Ungulaviridae</taxon>
        <taxon>Captovirus</taxon>
        <taxon>Acidianus filamentous virus 1</taxon>
    </lineage>
</organism>
<proteinExistence type="predicted"/>
<feature type="chain" id="PRO_0000384535" description="Putative zinc finger protein ORF110">
    <location>
        <begin position="1"/>
        <end position="110"/>
    </location>
</feature>
<feature type="zinc finger region" description="C2H2-type">
    <location>
        <begin position="3"/>
        <end position="26"/>
    </location>
</feature>
<organismHost>
    <name type="scientific">Acidianus hospitalis</name>
    <dbReference type="NCBI Taxonomy" id="563177"/>
</organismHost>
<organismHost>
    <name type="scientific">Acidianus infernus</name>
    <dbReference type="NCBI Taxonomy" id="12915"/>
</organismHost>
<sequence>MTYVCTACKLKFHTFEEFKIHVHLFHPELDKLVEPFPDRKEYRLSIRLDKQTYNMLLNIKNNIQRDNDIGLNTTIKALIYIVNYLLSKGYTIDELTNLPNKVSVIVGGDK</sequence>
<gene>
    <name type="ORF">ORF110</name>
</gene>
<reference key="1">
    <citation type="journal article" date="2003" name="Virology">
        <title>AFV1, a novel virus infecting hyperthermophilic archaea of the genus acidianus.</title>
        <authorList>
            <person name="Bettstetter M."/>
            <person name="Peng X."/>
            <person name="Garrett R.A."/>
            <person name="Prangishvili D."/>
        </authorList>
    </citation>
    <scope>NUCLEOTIDE SEQUENCE [GENOMIC DNA]</scope>
</reference>
<protein>
    <recommendedName>
        <fullName>Putative zinc finger protein ORF110</fullName>
    </recommendedName>
</protein>
<keyword id="KW-0479">Metal-binding</keyword>
<keyword id="KW-1185">Reference proteome</keyword>
<keyword id="KW-0862">Zinc</keyword>
<keyword id="KW-0863">Zinc-finger</keyword>